<evidence type="ECO:0000255" key="1">
    <source>
        <dbReference type="HAMAP-Rule" id="MF_02002"/>
    </source>
</evidence>
<name>SYI_CAMHC</name>
<comment type="function">
    <text evidence="1">Catalyzes the attachment of isoleucine to tRNA(Ile). As IleRS can inadvertently accommodate and process structurally similar amino acids such as valine, to avoid such errors it has two additional distinct tRNA(Ile)-dependent editing activities. One activity is designated as 'pretransfer' editing and involves the hydrolysis of activated Val-AMP. The other activity is designated 'posttransfer' editing and involves deacylation of mischarged Val-tRNA(Ile).</text>
</comment>
<comment type="catalytic activity">
    <reaction evidence="1">
        <text>tRNA(Ile) + L-isoleucine + ATP = L-isoleucyl-tRNA(Ile) + AMP + diphosphate</text>
        <dbReference type="Rhea" id="RHEA:11060"/>
        <dbReference type="Rhea" id="RHEA-COMP:9666"/>
        <dbReference type="Rhea" id="RHEA-COMP:9695"/>
        <dbReference type="ChEBI" id="CHEBI:30616"/>
        <dbReference type="ChEBI" id="CHEBI:33019"/>
        <dbReference type="ChEBI" id="CHEBI:58045"/>
        <dbReference type="ChEBI" id="CHEBI:78442"/>
        <dbReference type="ChEBI" id="CHEBI:78528"/>
        <dbReference type="ChEBI" id="CHEBI:456215"/>
        <dbReference type="EC" id="6.1.1.5"/>
    </reaction>
</comment>
<comment type="cofactor">
    <cofactor evidence="1">
        <name>Zn(2+)</name>
        <dbReference type="ChEBI" id="CHEBI:29105"/>
    </cofactor>
    <text evidence="1">Binds 1 zinc ion per subunit.</text>
</comment>
<comment type="subunit">
    <text evidence="1">Monomer.</text>
</comment>
<comment type="subcellular location">
    <subcellularLocation>
        <location evidence="1">Cytoplasm</location>
    </subcellularLocation>
</comment>
<comment type="domain">
    <text evidence="1">IleRS has two distinct active sites: one for aminoacylation and one for editing. The misactivated valine is translocated from the active site to the editing site, which sterically excludes the correctly activated isoleucine. The single editing site contains two valyl binding pockets, one specific for each substrate (Val-AMP or Val-tRNA(Ile)).</text>
</comment>
<comment type="similarity">
    <text evidence="1">Belongs to the class-I aminoacyl-tRNA synthetase family. IleS type 1 subfamily.</text>
</comment>
<gene>
    <name evidence="1" type="primary">ileS</name>
    <name type="ordered locus">CHAB381_0906</name>
</gene>
<feature type="chain" id="PRO_1000022055" description="Isoleucine--tRNA ligase">
    <location>
        <begin position="1"/>
        <end position="921"/>
    </location>
</feature>
<feature type="short sequence motif" description="'HIGH' region">
    <location>
        <begin position="59"/>
        <end position="69"/>
    </location>
</feature>
<feature type="short sequence motif" description="'KMSKS' region">
    <location>
        <begin position="610"/>
        <end position="614"/>
    </location>
</feature>
<feature type="binding site" evidence="1">
    <location>
        <position position="569"/>
    </location>
    <ligand>
        <name>L-isoleucyl-5'-AMP</name>
        <dbReference type="ChEBI" id="CHEBI:178002"/>
    </ligand>
</feature>
<feature type="binding site" evidence="1">
    <location>
        <position position="613"/>
    </location>
    <ligand>
        <name>ATP</name>
        <dbReference type="ChEBI" id="CHEBI:30616"/>
    </ligand>
</feature>
<feature type="binding site" evidence="1">
    <location>
        <position position="896"/>
    </location>
    <ligand>
        <name>Zn(2+)</name>
        <dbReference type="ChEBI" id="CHEBI:29105"/>
    </ligand>
</feature>
<feature type="binding site" evidence="1">
    <location>
        <position position="899"/>
    </location>
    <ligand>
        <name>Zn(2+)</name>
        <dbReference type="ChEBI" id="CHEBI:29105"/>
    </ligand>
</feature>
<feature type="binding site" evidence="1">
    <location>
        <position position="911"/>
    </location>
    <ligand>
        <name>Zn(2+)</name>
        <dbReference type="ChEBI" id="CHEBI:29105"/>
    </ligand>
</feature>
<feature type="binding site" evidence="1">
    <location>
        <position position="914"/>
    </location>
    <ligand>
        <name>Zn(2+)</name>
        <dbReference type="ChEBI" id="CHEBI:29105"/>
    </ligand>
</feature>
<keyword id="KW-0030">Aminoacyl-tRNA synthetase</keyword>
<keyword id="KW-0067">ATP-binding</keyword>
<keyword id="KW-0963">Cytoplasm</keyword>
<keyword id="KW-0436">Ligase</keyword>
<keyword id="KW-0479">Metal-binding</keyword>
<keyword id="KW-0547">Nucleotide-binding</keyword>
<keyword id="KW-0648">Protein biosynthesis</keyword>
<keyword id="KW-1185">Reference proteome</keyword>
<keyword id="KW-0862">Zinc</keyword>
<reference key="1">
    <citation type="submission" date="2007-07" db="EMBL/GenBank/DDBJ databases">
        <title>Complete genome sequence of Campylobacter hominis ATCC BAA-381, a commensal isolated from the human gastrointestinal tract.</title>
        <authorList>
            <person name="Fouts D.E."/>
            <person name="Mongodin E.F."/>
            <person name="Puiu D."/>
            <person name="Sebastian Y."/>
            <person name="Miller W.G."/>
            <person name="Mandrell R.E."/>
            <person name="Nelson K.E."/>
        </authorList>
    </citation>
    <scope>NUCLEOTIDE SEQUENCE [LARGE SCALE GENOMIC DNA]</scope>
    <source>
        <strain>ATCC BAA-381 / DSM 21671 / CCUG 45161 / LMG 19568 / NCTC 13146 / CH001A</strain>
    </source>
</reference>
<accession>A7I1S7</accession>
<dbReference type="EC" id="6.1.1.5" evidence="1"/>
<dbReference type="EMBL" id="CP000776">
    <property type="protein sequence ID" value="ABS51595.1"/>
    <property type="molecule type" value="Genomic_DNA"/>
</dbReference>
<dbReference type="RefSeq" id="WP_012108759.1">
    <property type="nucleotide sequence ID" value="NC_009714.1"/>
</dbReference>
<dbReference type="SMR" id="A7I1S7"/>
<dbReference type="STRING" id="360107.CHAB381_0906"/>
<dbReference type="KEGG" id="cha:CHAB381_0906"/>
<dbReference type="eggNOG" id="COG0060">
    <property type="taxonomic scope" value="Bacteria"/>
</dbReference>
<dbReference type="HOGENOM" id="CLU_001493_7_0_7"/>
<dbReference type="OrthoDB" id="9810365at2"/>
<dbReference type="Proteomes" id="UP000002407">
    <property type="component" value="Chromosome"/>
</dbReference>
<dbReference type="GO" id="GO:0005829">
    <property type="term" value="C:cytosol"/>
    <property type="evidence" value="ECO:0007669"/>
    <property type="project" value="TreeGrafter"/>
</dbReference>
<dbReference type="GO" id="GO:0002161">
    <property type="term" value="F:aminoacyl-tRNA deacylase activity"/>
    <property type="evidence" value="ECO:0007669"/>
    <property type="project" value="InterPro"/>
</dbReference>
<dbReference type="GO" id="GO:0005524">
    <property type="term" value="F:ATP binding"/>
    <property type="evidence" value="ECO:0007669"/>
    <property type="project" value="UniProtKB-UniRule"/>
</dbReference>
<dbReference type="GO" id="GO:0004822">
    <property type="term" value="F:isoleucine-tRNA ligase activity"/>
    <property type="evidence" value="ECO:0007669"/>
    <property type="project" value="UniProtKB-UniRule"/>
</dbReference>
<dbReference type="GO" id="GO:0000049">
    <property type="term" value="F:tRNA binding"/>
    <property type="evidence" value="ECO:0007669"/>
    <property type="project" value="InterPro"/>
</dbReference>
<dbReference type="GO" id="GO:0008270">
    <property type="term" value="F:zinc ion binding"/>
    <property type="evidence" value="ECO:0007669"/>
    <property type="project" value="UniProtKB-UniRule"/>
</dbReference>
<dbReference type="GO" id="GO:0006428">
    <property type="term" value="P:isoleucyl-tRNA aminoacylation"/>
    <property type="evidence" value="ECO:0007669"/>
    <property type="project" value="UniProtKB-UniRule"/>
</dbReference>
<dbReference type="CDD" id="cd07960">
    <property type="entry name" value="Anticodon_Ia_Ile_BEm"/>
    <property type="match status" value="1"/>
</dbReference>
<dbReference type="FunFam" id="3.40.50.620:FF:000092">
    <property type="entry name" value="Isoleucine--tRNA ligase"/>
    <property type="match status" value="1"/>
</dbReference>
<dbReference type="Gene3D" id="1.10.730.20">
    <property type="match status" value="1"/>
</dbReference>
<dbReference type="Gene3D" id="3.40.50.620">
    <property type="entry name" value="HUPs"/>
    <property type="match status" value="2"/>
</dbReference>
<dbReference type="Gene3D" id="3.90.740.10">
    <property type="entry name" value="Valyl/Leucyl/Isoleucyl-tRNA synthetase, editing domain"/>
    <property type="match status" value="1"/>
</dbReference>
<dbReference type="HAMAP" id="MF_02002">
    <property type="entry name" value="Ile_tRNA_synth_type1"/>
    <property type="match status" value="1"/>
</dbReference>
<dbReference type="InterPro" id="IPR001412">
    <property type="entry name" value="aa-tRNA-synth_I_CS"/>
</dbReference>
<dbReference type="InterPro" id="IPR002300">
    <property type="entry name" value="aa-tRNA-synth_Ia"/>
</dbReference>
<dbReference type="InterPro" id="IPR033708">
    <property type="entry name" value="Anticodon_Ile_BEm"/>
</dbReference>
<dbReference type="InterPro" id="IPR002301">
    <property type="entry name" value="Ile-tRNA-ligase"/>
</dbReference>
<dbReference type="InterPro" id="IPR023585">
    <property type="entry name" value="Ile-tRNA-ligase_type1"/>
</dbReference>
<dbReference type="InterPro" id="IPR050081">
    <property type="entry name" value="Ile-tRNA_ligase"/>
</dbReference>
<dbReference type="InterPro" id="IPR013155">
    <property type="entry name" value="M/V/L/I-tRNA-synth_anticd-bd"/>
</dbReference>
<dbReference type="InterPro" id="IPR014729">
    <property type="entry name" value="Rossmann-like_a/b/a_fold"/>
</dbReference>
<dbReference type="InterPro" id="IPR009080">
    <property type="entry name" value="tRNAsynth_Ia_anticodon-bd"/>
</dbReference>
<dbReference type="InterPro" id="IPR009008">
    <property type="entry name" value="Val/Leu/Ile-tRNA-synth_edit"/>
</dbReference>
<dbReference type="NCBIfam" id="TIGR00392">
    <property type="entry name" value="ileS"/>
    <property type="match status" value="1"/>
</dbReference>
<dbReference type="PANTHER" id="PTHR42765:SF1">
    <property type="entry name" value="ISOLEUCINE--TRNA LIGASE, MITOCHONDRIAL"/>
    <property type="match status" value="1"/>
</dbReference>
<dbReference type="PANTHER" id="PTHR42765">
    <property type="entry name" value="SOLEUCYL-TRNA SYNTHETASE"/>
    <property type="match status" value="1"/>
</dbReference>
<dbReference type="Pfam" id="PF08264">
    <property type="entry name" value="Anticodon_1"/>
    <property type="match status" value="1"/>
</dbReference>
<dbReference type="Pfam" id="PF00133">
    <property type="entry name" value="tRNA-synt_1"/>
    <property type="match status" value="1"/>
</dbReference>
<dbReference type="PRINTS" id="PR00984">
    <property type="entry name" value="TRNASYNTHILE"/>
</dbReference>
<dbReference type="SUPFAM" id="SSF47323">
    <property type="entry name" value="Anticodon-binding domain of a subclass of class I aminoacyl-tRNA synthetases"/>
    <property type="match status" value="1"/>
</dbReference>
<dbReference type="SUPFAM" id="SSF52374">
    <property type="entry name" value="Nucleotidylyl transferase"/>
    <property type="match status" value="1"/>
</dbReference>
<dbReference type="SUPFAM" id="SSF50677">
    <property type="entry name" value="ValRS/IleRS/LeuRS editing domain"/>
    <property type="match status" value="1"/>
</dbReference>
<dbReference type="PROSITE" id="PS00178">
    <property type="entry name" value="AA_TRNA_LIGASE_I"/>
    <property type="match status" value="1"/>
</dbReference>
<organism>
    <name type="scientific">Campylobacter hominis (strain ATCC BAA-381 / DSM 21671 / CCUG 45161 / LMG 19568 / NCTC 13146 / CH001A)</name>
    <dbReference type="NCBI Taxonomy" id="360107"/>
    <lineage>
        <taxon>Bacteria</taxon>
        <taxon>Pseudomonadati</taxon>
        <taxon>Campylobacterota</taxon>
        <taxon>Epsilonproteobacteria</taxon>
        <taxon>Campylobacterales</taxon>
        <taxon>Campylobacteraceae</taxon>
        <taxon>Campylobacter</taxon>
    </lineage>
</organism>
<proteinExistence type="inferred from homology"/>
<sequence length="921" mass="106166">MDYKDTLFLPTTDFAMRGNLPQNEPKRFKAWYNERKVYEKMKAKRQSAGVSFNLHDGPPYANGHLHIGHALNKILKDIIVKTHYFAGENVRYVPGWDCHGLPIEQQIEIKLGGKKNETSKTKIREMCRAHAREFINIQRDEFKDMGIIGDWDDPYITMKFKFEAEIYKGLCEIAKKGLLIERSKPVFWSWAAGSALAEAEVEYKDKEDYSIYIAFDLSDEANKKIGAKGAKAVIWTTTPWTIPANQAICLNPDEIYVLTSENFIFAKHLLENLVQKGISKGKIVKEFASGELENLYAKNPLNDRPSKFILGEHVLMDGGTGLVHTAPGHGEDDYYVSLKYGIETIMPVDDAGKYDETIKTKKLFRDNVVDEFVGMHIFKANEKIVELLGDAVVSVGKFTHSYPYCWRTHKPVIYRATKQWFIAMDKPFKDGKTLREVALNALKEVKFYPEVGRNRITSMIENRPDWCISRQRDWGVPIAFFRDKATKEPIFDDEILNNIYEIFKEKGADAWWELDIGELLPKNCKYEAKNLEKVVDILDVWFDSGSTWRAVLKSGDYDAGEFRADMYLEGSDQHRGWFQSSLLVSSAINETAPYKSILTHGFTVDEKGQKMSKSVGNVIAPQEVAKKYGVEIMRLWVGLSDYSSDLKISDNILKQVSEQYRKIRNTIRFLLANVSDLKEIETNNFTMLDKWILSKANIAFEETNRAFRNYDFSKGFSVLLNFLSADLSGIYLDVCKDRLYCDELDSSRRRSAQSTMVLITRTLLPLIAPTLTYTVDEVMEFAPEIVKNGKKDAFDLVYEPLEFEDFKKNETGELFIESRAKFFEIIDTLKKEKKIKSTLELVLETSSNEILSHDLDEICDWYMVSHMRSIESRDFLAEFKVEDETFRLVLSDHHKCPRCWKFDAKNEDELCPRCQKVLNVK</sequence>
<protein>
    <recommendedName>
        <fullName evidence="1">Isoleucine--tRNA ligase</fullName>
        <ecNumber evidence="1">6.1.1.5</ecNumber>
    </recommendedName>
    <alternativeName>
        <fullName evidence="1">Isoleucyl-tRNA synthetase</fullName>
        <shortName evidence="1">IleRS</shortName>
    </alternativeName>
</protein>